<proteinExistence type="inferred from homology"/>
<sequence length="223" mass="23479">MKRTKSIRHASFRKNWSARHLTPVALAVATVFMLAGCEKSDETVSLYQNADDCSAANPGKSAECTTAYNNALKEAERTAPKYATREDCVAEFGEGQCQQAPAQAGMAPENQAQAQQSSGSFWMPLMAGYMMGRLMGGGAGFAQQPLFSSKNPASPAYGKYTDATGKNYGAAQPGRTMTVPKTAMAPKPATTTTVTRGGFGESVAKQSTMQRSATGTSSRSMGG</sequence>
<reference key="1">
    <citation type="journal article" date="2006" name="BMC Genomics">
        <title>Complete genome sequence of Shigella flexneri 5b and comparison with Shigella flexneri 2a.</title>
        <authorList>
            <person name="Nie H."/>
            <person name="Yang F."/>
            <person name="Zhang X."/>
            <person name="Yang J."/>
            <person name="Chen L."/>
            <person name="Wang J."/>
            <person name="Xiong Z."/>
            <person name="Peng J."/>
            <person name="Sun L."/>
            <person name="Dong J."/>
            <person name="Xue Y."/>
            <person name="Xu X."/>
            <person name="Chen S."/>
            <person name="Yao Z."/>
            <person name="Shen Y."/>
            <person name="Jin Q."/>
        </authorList>
    </citation>
    <scope>NUCLEOTIDE SEQUENCE [LARGE SCALE GENOMIC DNA]</scope>
    <source>
        <strain>8401</strain>
    </source>
</reference>
<accession>Q0T0M1</accession>
<name>YGIB_SHIF8</name>
<protein>
    <recommendedName>
        <fullName evidence="1">UPF0441 protein YgiB</fullName>
    </recommendedName>
</protein>
<dbReference type="EMBL" id="CP000266">
    <property type="protein sequence ID" value="ABF05144.1"/>
    <property type="molecule type" value="Genomic_DNA"/>
</dbReference>
<dbReference type="RefSeq" id="WP_000831543.1">
    <property type="nucleotide sequence ID" value="NC_008258.1"/>
</dbReference>
<dbReference type="SMR" id="Q0T0M1"/>
<dbReference type="KEGG" id="sfv:SFV_3081"/>
<dbReference type="HOGENOM" id="CLU_095624_0_0_6"/>
<dbReference type="Proteomes" id="UP000000659">
    <property type="component" value="Chromosome"/>
</dbReference>
<dbReference type="HAMAP" id="MF_01188">
    <property type="entry name" value="UPF0441"/>
    <property type="match status" value="1"/>
</dbReference>
<dbReference type="InterPro" id="IPR009576">
    <property type="entry name" value="Biofilm_formation_YgiB"/>
</dbReference>
<dbReference type="NCBIfam" id="NF008655">
    <property type="entry name" value="PRK11653.1"/>
    <property type="match status" value="1"/>
</dbReference>
<dbReference type="Pfam" id="PF06693">
    <property type="entry name" value="DUF1190"/>
    <property type="match status" value="1"/>
</dbReference>
<comment type="similarity">
    <text evidence="1">Belongs to the UPF0441 family.</text>
</comment>
<evidence type="ECO:0000255" key="1">
    <source>
        <dbReference type="HAMAP-Rule" id="MF_01188"/>
    </source>
</evidence>
<evidence type="ECO:0000256" key="2">
    <source>
        <dbReference type="SAM" id="MobiDB-lite"/>
    </source>
</evidence>
<feature type="chain" id="PRO_0000293645" description="UPF0441 protein YgiB">
    <location>
        <begin position="1"/>
        <end position="223"/>
    </location>
</feature>
<feature type="region of interest" description="Disordered" evidence="2">
    <location>
        <begin position="178"/>
        <end position="223"/>
    </location>
</feature>
<feature type="compositionally biased region" description="Low complexity" evidence="2">
    <location>
        <begin position="178"/>
        <end position="195"/>
    </location>
</feature>
<feature type="compositionally biased region" description="Polar residues" evidence="2">
    <location>
        <begin position="204"/>
        <end position="223"/>
    </location>
</feature>
<gene>
    <name evidence="1" type="primary">ygiB</name>
    <name type="ordered locus">SFV_3081</name>
</gene>
<organism>
    <name type="scientific">Shigella flexneri serotype 5b (strain 8401)</name>
    <dbReference type="NCBI Taxonomy" id="373384"/>
    <lineage>
        <taxon>Bacteria</taxon>
        <taxon>Pseudomonadati</taxon>
        <taxon>Pseudomonadota</taxon>
        <taxon>Gammaproteobacteria</taxon>
        <taxon>Enterobacterales</taxon>
        <taxon>Enterobacteriaceae</taxon>
        <taxon>Shigella</taxon>
    </lineage>
</organism>